<name>KHSE_BRUA2</name>
<gene>
    <name evidence="1" type="primary">thrB</name>
    <name type="ordered locus">BAB1_0502</name>
</gene>
<feature type="chain" id="PRO_0000300783" description="Homoserine kinase">
    <location>
        <begin position="1"/>
        <end position="326"/>
    </location>
</feature>
<comment type="catalytic activity">
    <reaction evidence="1">
        <text>L-homoserine + ATP = O-phospho-L-homoserine + ADP + H(+)</text>
        <dbReference type="Rhea" id="RHEA:13985"/>
        <dbReference type="ChEBI" id="CHEBI:15378"/>
        <dbReference type="ChEBI" id="CHEBI:30616"/>
        <dbReference type="ChEBI" id="CHEBI:57476"/>
        <dbReference type="ChEBI" id="CHEBI:57590"/>
        <dbReference type="ChEBI" id="CHEBI:456216"/>
        <dbReference type="EC" id="2.7.1.39"/>
    </reaction>
</comment>
<comment type="pathway">
    <text evidence="1">Amino-acid biosynthesis; L-threonine biosynthesis; L-threonine from L-aspartate: step 4/5.</text>
</comment>
<comment type="similarity">
    <text evidence="1">Belongs to the pseudomonas-type ThrB family.</text>
</comment>
<sequence length="326" mass="36645">MAVYTDINEIELGAFLRHYDIGTLTSYKGIAEGVENSNYLLHTSSGSFILTLYEKRTNREDLPFFLGLMQHLAKRGLECPQPVVRNDGAMIGQLAGRPAAIVTFLEGMWMRRPTVAHCEAVGEGLAHMHLAGADFPMRRRNGLTLPDWRPLWNLSRKCADTVERGLVAETEADLDFLEKNWPADLPQGVIHADLFPDNAFFLGDRLSGFIDFYFACTDILAYDVAVCLNAWCFEKDFSYNRTKGAALLRGYTSVRPLSEAEADALLVLARGAAVRFMLTRLYDWLTVPAGSFVVKKDPMEYVRRMRFHRQIESAAEYGLEMQGVAA</sequence>
<keyword id="KW-0028">Amino-acid biosynthesis</keyword>
<keyword id="KW-0067">ATP-binding</keyword>
<keyword id="KW-0418">Kinase</keyword>
<keyword id="KW-0547">Nucleotide-binding</keyword>
<keyword id="KW-1185">Reference proteome</keyword>
<keyword id="KW-0791">Threonine biosynthesis</keyword>
<keyword id="KW-0808">Transferase</keyword>
<accession>Q2YMI4</accession>
<reference key="1">
    <citation type="journal article" date="2005" name="Infect. Immun.">
        <title>Whole-genome analyses of speciation events in pathogenic Brucellae.</title>
        <authorList>
            <person name="Chain P.S."/>
            <person name="Comerci D.J."/>
            <person name="Tolmasky M.E."/>
            <person name="Larimer F.W."/>
            <person name="Malfatti S.A."/>
            <person name="Vergez L.M."/>
            <person name="Aguero F."/>
            <person name="Land M.L."/>
            <person name="Ugalde R.A."/>
            <person name="Garcia E."/>
        </authorList>
    </citation>
    <scope>NUCLEOTIDE SEQUENCE [LARGE SCALE GENOMIC DNA]</scope>
    <source>
        <strain>2308</strain>
    </source>
</reference>
<protein>
    <recommendedName>
        <fullName evidence="1">Homoserine kinase</fullName>
        <shortName evidence="1">HK</shortName>
        <shortName evidence="1">HSK</shortName>
        <ecNumber evidence="1">2.7.1.39</ecNumber>
    </recommendedName>
</protein>
<proteinExistence type="inferred from homology"/>
<organism>
    <name type="scientific">Brucella abortus (strain 2308)</name>
    <dbReference type="NCBI Taxonomy" id="359391"/>
    <lineage>
        <taxon>Bacteria</taxon>
        <taxon>Pseudomonadati</taxon>
        <taxon>Pseudomonadota</taxon>
        <taxon>Alphaproteobacteria</taxon>
        <taxon>Hyphomicrobiales</taxon>
        <taxon>Brucellaceae</taxon>
        <taxon>Brucella/Ochrobactrum group</taxon>
        <taxon>Brucella</taxon>
    </lineage>
</organism>
<evidence type="ECO:0000255" key="1">
    <source>
        <dbReference type="HAMAP-Rule" id="MF_00301"/>
    </source>
</evidence>
<dbReference type="EC" id="2.7.1.39" evidence="1"/>
<dbReference type="EMBL" id="AM040264">
    <property type="protein sequence ID" value="CAJ10458.1"/>
    <property type="molecule type" value="Genomic_DNA"/>
</dbReference>
<dbReference type="RefSeq" id="WP_002963634.1">
    <property type="nucleotide sequence ID" value="NZ_KN046823.1"/>
</dbReference>
<dbReference type="SMR" id="Q2YMI4"/>
<dbReference type="STRING" id="359391.BAB1_0502"/>
<dbReference type="KEGG" id="bmf:BAB1_0502"/>
<dbReference type="PATRIC" id="fig|359391.11.peg.2540"/>
<dbReference type="HOGENOM" id="CLU_053300_1_0_5"/>
<dbReference type="PhylomeDB" id="Q2YMI4"/>
<dbReference type="UniPathway" id="UPA00050">
    <property type="reaction ID" value="UER00064"/>
</dbReference>
<dbReference type="Proteomes" id="UP000002719">
    <property type="component" value="Chromosome I"/>
</dbReference>
<dbReference type="GO" id="GO:0005524">
    <property type="term" value="F:ATP binding"/>
    <property type="evidence" value="ECO:0007669"/>
    <property type="project" value="UniProtKB-KW"/>
</dbReference>
<dbReference type="GO" id="GO:0004413">
    <property type="term" value="F:homoserine kinase activity"/>
    <property type="evidence" value="ECO:0007669"/>
    <property type="project" value="UniProtKB-UniRule"/>
</dbReference>
<dbReference type="GO" id="GO:0009088">
    <property type="term" value="P:threonine biosynthetic process"/>
    <property type="evidence" value="ECO:0007669"/>
    <property type="project" value="UniProtKB-UniRule"/>
</dbReference>
<dbReference type="CDD" id="cd05153">
    <property type="entry name" value="HomoserineK_II"/>
    <property type="match status" value="1"/>
</dbReference>
<dbReference type="Gene3D" id="3.90.1200.10">
    <property type="match status" value="1"/>
</dbReference>
<dbReference type="Gene3D" id="3.30.200.20">
    <property type="entry name" value="Phosphorylase Kinase, domain 1"/>
    <property type="match status" value="1"/>
</dbReference>
<dbReference type="HAMAP" id="MF_00301">
    <property type="entry name" value="Homoser_kinase_2"/>
    <property type="match status" value="1"/>
</dbReference>
<dbReference type="InterPro" id="IPR002575">
    <property type="entry name" value="Aminoglycoside_PTrfase"/>
</dbReference>
<dbReference type="InterPro" id="IPR005280">
    <property type="entry name" value="Homoserine_kinase_II"/>
</dbReference>
<dbReference type="InterPro" id="IPR011009">
    <property type="entry name" value="Kinase-like_dom_sf"/>
</dbReference>
<dbReference type="InterPro" id="IPR050249">
    <property type="entry name" value="Pseudomonas-type_ThrB"/>
</dbReference>
<dbReference type="NCBIfam" id="NF003558">
    <property type="entry name" value="PRK05231.1"/>
    <property type="match status" value="1"/>
</dbReference>
<dbReference type="NCBIfam" id="TIGR00938">
    <property type="entry name" value="thrB_alt"/>
    <property type="match status" value="1"/>
</dbReference>
<dbReference type="PANTHER" id="PTHR21064:SF6">
    <property type="entry name" value="AMINOGLYCOSIDE PHOSPHOTRANSFERASE DOMAIN-CONTAINING PROTEIN"/>
    <property type="match status" value="1"/>
</dbReference>
<dbReference type="PANTHER" id="PTHR21064">
    <property type="entry name" value="AMINOGLYCOSIDE PHOSPHOTRANSFERASE DOMAIN-CONTAINING PROTEIN-RELATED"/>
    <property type="match status" value="1"/>
</dbReference>
<dbReference type="Pfam" id="PF01636">
    <property type="entry name" value="APH"/>
    <property type="match status" value="1"/>
</dbReference>
<dbReference type="SUPFAM" id="SSF56112">
    <property type="entry name" value="Protein kinase-like (PK-like)"/>
    <property type="match status" value="1"/>
</dbReference>